<organism>
    <name type="scientific">Homo sapiens</name>
    <name type="common">Human</name>
    <dbReference type="NCBI Taxonomy" id="9606"/>
    <lineage>
        <taxon>Eukaryota</taxon>
        <taxon>Metazoa</taxon>
        <taxon>Chordata</taxon>
        <taxon>Craniata</taxon>
        <taxon>Vertebrata</taxon>
        <taxon>Euteleostomi</taxon>
        <taxon>Mammalia</taxon>
        <taxon>Eutheria</taxon>
        <taxon>Euarchontoglires</taxon>
        <taxon>Primates</taxon>
        <taxon>Haplorrhini</taxon>
        <taxon>Catarrhini</taxon>
        <taxon>Hominidae</taxon>
        <taxon>Homo</taxon>
    </lineage>
</organism>
<dbReference type="EMBL" id="AB028628">
    <property type="protein sequence ID" value="BAA96542.1"/>
    <property type="molecule type" value="mRNA"/>
</dbReference>
<dbReference type="EMBL" id="AF279306">
    <property type="protein sequence ID" value="AAK82972.1"/>
    <property type="molecule type" value="mRNA"/>
</dbReference>
<dbReference type="EMBL" id="AF151856">
    <property type="protein sequence ID" value="AAD34093.1"/>
    <property type="molecule type" value="mRNA"/>
</dbReference>
<dbReference type="EMBL" id="AF161495">
    <property type="protein sequence ID" value="AAF29110.1"/>
    <property type="molecule type" value="mRNA"/>
</dbReference>
<dbReference type="EMBL" id="AL050261">
    <property type="protein sequence ID" value="CAB43363.1"/>
    <property type="molecule type" value="mRNA"/>
</dbReference>
<dbReference type="EMBL" id="AK025738">
    <property type="protein sequence ID" value="BAB15228.1"/>
    <property type="molecule type" value="mRNA"/>
</dbReference>
<dbReference type="EMBL" id="CR457347">
    <property type="protein sequence ID" value="CAG33628.1"/>
    <property type="molecule type" value="mRNA"/>
</dbReference>
<dbReference type="EMBL" id="AC022098">
    <property type="status" value="NOT_ANNOTATED_CDS"/>
    <property type="molecule type" value="Genomic_DNA"/>
</dbReference>
<dbReference type="EMBL" id="BC010878">
    <property type="protein sequence ID" value="AAH10878.1"/>
    <property type="molecule type" value="mRNA"/>
</dbReference>
<dbReference type="CCDS" id="CCDS47469.1"/>
<dbReference type="PIR" id="T08661">
    <property type="entry name" value="T08661"/>
</dbReference>
<dbReference type="RefSeq" id="NP_054753.1">
    <property type="nucleotide sequence ID" value="NM_014034.3"/>
</dbReference>
<dbReference type="PDB" id="1TEY">
    <property type="method" value="NMR"/>
    <property type="chains" value="A=1-156"/>
</dbReference>
<dbReference type="PDB" id="2I32">
    <property type="method" value="X-ray"/>
    <property type="resolution" value="2.70 A"/>
    <property type="chains" value="A/B=1-157"/>
</dbReference>
<dbReference type="PDB" id="2IIJ">
    <property type="method" value="NMR"/>
    <property type="chains" value="A=1-156"/>
</dbReference>
<dbReference type="PDB" id="2IO5">
    <property type="method" value="X-ray"/>
    <property type="resolution" value="2.70 A"/>
    <property type="chains" value="A=1-172"/>
</dbReference>
<dbReference type="PDB" id="3AAD">
    <property type="method" value="X-ray"/>
    <property type="resolution" value="3.30 A"/>
    <property type="chains" value="B/D=1-155"/>
</dbReference>
<dbReference type="PDB" id="5C3I">
    <property type="method" value="X-ray"/>
    <property type="resolution" value="3.50 A"/>
    <property type="chains" value="A/E/I/M/Q/U=1-175"/>
</dbReference>
<dbReference type="PDB" id="6F0F">
    <property type="method" value="X-ray"/>
    <property type="resolution" value="2.00 A"/>
    <property type="chains" value="A=1-156"/>
</dbReference>
<dbReference type="PDB" id="6F0G">
    <property type="method" value="X-ray"/>
    <property type="resolution" value="2.30 A"/>
    <property type="chains" value="A/B=1-156"/>
</dbReference>
<dbReference type="PDB" id="6F0H">
    <property type="method" value="X-ray"/>
    <property type="resolution" value="1.98 A"/>
    <property type="chains" value="A/C=1-156"/>
</dbReference>
<dbReference type="PDB" id="6ZUF">
    <property type="method" value="X-ray"/>
    <property type="resolution" value="1.80 A"/>
    <property type="chains" value="A/B=1-156"/>
</dbReference>
<dbReference type="PDB" id="7LNY">
    <property type="method" value="X-ray"/>
    <property type="resolution" value="2.10 A"/>
    <property type="chains" value="A/B/C/D/E/F/G=1-155"/>
</dbReference>
<dbReference type="PDB" id="7LO0">
    <property type="method" value="X-ray"/>
    <property type="resolution" value="2.71 A"/>
    <property type="chains" value="A/B/C/D/E/F/G/H=1-155"/>
</dbReference>
<dbReference type="PDB" id="7V6Q">
    <property type="method" value="X-ray"/>
    <property type="resolution" value="3.00 A"/>
    <property type="chains" value="A/E=1-156"/>
</dbReference>
<dbReference type="PDB" id="8BV1">
    <property type="method" value="X-ray"/>
    <property type="resolution" value="2.83 A"/>
    <property type="chains" value="A/B/C/D/E/F=1-156"/>
</dbReference>
<dbReference type="PDB" id="8CJ1">
    <property type="method" value="X-ray"/>
    <property type="resolution" value="2.56 A"/>
    <property type="chains" value="A/B/C/D/E/F/G/H=1-156"/>
</dbReference>
<dbReference type="PDB" id="8CJ2">
    <property type="method" value="X-ray"/>
    <property type="resolution" value="2.13 A"/>
    <property type="chains" value="A/B/C/D=1-156"/>
</dbReference>
<dbReference type="PDB" id="8CJ3">
    <property type="method" value="X-ray"/>
    <property type="resolution" value="3.00 A"/>
    <property type="chains" value="A=1-156"/>
</dbReference>
<dbReference type="PDB" id="8Z50">
    <property type="method" value="X-ray"/>
    <property type="resolution" value="2.80 A"/>
    <property type="chains" value="A=1-173"/>
</dbReference>
<dbReference type="PDBsum" id="1TEY"/>
<dbReference type="PDBsum" id="2I32"/>
<dbReference type="PDBsum" id="2IIJ"/>
<dbReference type="PDBsum" id="2IO5"/>
<dbReference type="PDBsum" id="3AAD"/>
<dbReference type="PDBsum" id="5C3I"/>
<dbReference type="PDBsum" id="6F0F"/>
<dbReference type="PDBsum" id="6F0G"/>
<dbReference type="PDBsum" id="6F0H"/>
<dbReference type="PDBsum" id="6ZUF"/>
<dbReference type="PDBsum" id="7LNY"/>
<dbReference type="PDBsum" id="7LO0"/>
<dbReference type="PDBsum" id="7V6Q"/>
<dbReference type="PDBsum" id="8BV1"/>
<dbReference type="PDBsum" id="8CJ1"/>
<dbReference type="PDBsum" id="8CJ2"/>
<dbReference type="PDBsum" id="8CJ3"/>
<dbReference type="PDBsum" id="8Z50"/>
<dbReference type="BMRB" id="Q9Y294"/>
<dbReference type="SMR" id="Q9Y294"/>
<dbReference type="BioGRID" id="117368">
    <property type="interactions" value="251"/>
</dbReference>
<dbReference type="CORUM" id="Q9Y294"/>
<dbReference type="DIP" id="DIP-29241N"/>
<dbReference type="FunCoup" id="Q9Y294">
    <property type="interactions" value="2960"/>
</dbReference>
<dbReference type="IntAct" id="Q9Y294">
    <property type="interactions" value="63"/>
</dbReference>
<dbReference type="MINT" id="Q9Y294"/>
<dbReference type="STRING" id="9606.ENSP00000229595"/>
<dbReference type="BindingDB" id="Q9Y294"/>
<dbReference type="ChEMBL" id="CHEMBL3392950"/>
<dbReference type="GlyGen" id="Q9Y294">
    <property type="glycosylation" value="1 site, 1 O-linked glycan (1 site)"/>
</dbReference>
<dbReference type="iPTMnet" id="Q9Y294"/>
<dbReference type="PhosphoSitePlus" id="Q9Y294"/>
<dbReference type="BioMuta" id="ASF1A"/>
<dbReference type="DMDM" id="74735206"/>
<dbReference type="jPOST" id="Q9Y294"/>
<dbReference type="MassIVE" id="Q9Y294"/>
<dbReference type="PaxDb" id="9606-ENSP00000229595"/>
<dbReference type="PeptideAtlas" id="Q9Y294"/>
<dbReference type="ProteomicsDB" id="85702"/>
<dbReference type="Pumba" id="Q9Y294"/>
<dbReference type="Antibodypedia" id="32585">
    <property type="antibodies" value="426 antibodies from 35 providers"/>
</dbReference>
<dbReference type="DNASU" id="25842"/>
<dbReference type="Ensembl" id="ENST00000229595.6">
    <property type="protein sequence ID" value="ENSP00000229595.5"/>
    <property type="gene ID" value="ENSG00000111875.8"/>
</dbReference>
<dbReference type="GeneID" id="25842"/>
<dbReference type="KEGG" id="hsa:25842"/>
<dbReference type="MANE-Select" id="ENST00000229595.6">
    <property type="protein sequence ID" value="ENSP00000229595.5"/>
    <property type="RefSeq nucleotide sequence ID" value="NM_014034.3"/>
    <property type="RefSeq protein sequence ID" value="NP_054753.1"/>
</dbReference>
<dbReference type="UCSC" id="uc011ebn.3">
    <property type="organism name" value="human"/>
</dbReference>
<dbReference type="AGR" id="HGNC:20995"/>
<dbReference type="CTD" id="25842"/>
<dbReference type="DisGeNET" id="25842"/>
<dbReference type="GeneCards" id="ASF1A"/>
<dbReference type="HGNC" id="HGNC:20995">
    <property type="gene designation" value="ASF1A"/>
</dbReference>
<dbReference type="HPA" id="ENSG00000111875">
    <property type="expression patterns" value="Low tissue specificity"/>
</dbReference>
<dbReference type="MIM" id="609189">
    <property type="type" value="gene"/>
</dbReference>
<dbReference type="neXtProt" id="NX_Q9Y294"/>
<dbReference type="OpenTargets" id="ENSG00000111875"/>
<dbReference type="PharmGKB" id="PA128394636"/>
<dbReference type="VEuPathDB" id="HostDB:ENSG00000111875"/>
<dbReference type="eggNOG" id="KOG3265">
    <property type="taxonomic scope" value="Eukaryota"/>
</dbReference>
<dbReference type="GeneTree" id="ENSGT00390000004692"/>
<dbReference type="HOGENOM" id="CLU_060354_1_2_1"/>
<dbReference type="InParanoid" id="Q9Y294"/>
<dbReference type="OMA" id="DYADQEM"/>
<dbReference type="OrthoDB" id="29755at2759"/>
<dbReference type="PAN-GO" id="Q9Y294">
    <property type="GO annotations" value="3 GO annotations based on evolutionary models"/>
</dbReference>
<dbReference type="PhylomeDB" id="Q9Y294"/>
<dbReference type="TreeFam" id="TF106429"/>
<dbReference type="PathwayCommons" id="Q9Y294"/>
<dbReference type="Reactome" id="R-HSA-2559584">
    <property type="pathway name" value="Formation of Senescence-Associated Heterochromatin Foci (SAHF)"/>
</dbReference>
<dbReference type="SignaLink" id="Q9Y294"/>
<dbReference type="SIGNOR" id="Q9Y294"/>
<dbReference type="BioGRID-ORCS" id="25842">
    <property type="hits" value="80 hits in 1164 CRISPR screens"/>
</dbReference>
<dbReference type="EvolutionaryTrace" id="Q9Y294"/>
<dbReference type="GeneWiki" id="ASF1A"/>
<dbReference type="GenomeRNAi" id="25842"/>
<dbReference type="Pharos" id="Q9Y294">
    <property type="development level" value="Tchem"/>
</dbReference>
<dbReference type="PRO" id="PR:Q9Y294"/>
<dbReference type="Proteomes" id="UP000005640">
    <property type="component" value="Chromosome 6"/>
</dbReference>
<dbReference type="RNAct" id="Q9Y294">
    <property type="molecule type" value="protein"/>
</dbReference>
<dbReference type="Bgee" id="ENSG00000111875">
    <property type="expression patterns" value="Expressed in oocyte and 211 other cell types or tissues"/>
</dbReference>
<dbReference type="GO" id="GO:0000785">
    <property type="term" value="C:chromatin"/>
    <property type="evidence" value="ECO:0000314"/>
    <property type="project" value="UniProtKB"/>
</dbReference>
<dbReference type="GO" id="GO:0005654">
    <property type="term" value="C:nucleoplasm"/>
    <property type="evidence" value="ECO:0000314"/>
    <property type="project" value="HPA"/>
</dbReference>
<dbReference type="GO" id="GO:0005634">
    <property type="term" value="C:nucleus"/>
    <property type="evidence" value="ECO:0000314"/>
    <property type="project" value="LIFEdb"/>
</dbReference>
<dbReference type="GO" id="GO:0032991">
    <property type="term" value="C:protein-containing complex"/>
    <property type="evidence" value="ECO:0000314"/>
    <property type="project" value="UniProtKB"/>
</dbReference>
<dbReference type="GO" id="GO:0035861">
    <property type="term" value="C:site of double-strand break"/>
    <property type="evidence" value="ECO:0000314"/>
    <property type="project" value="UniProt"/>
</dbReference>
<dbReference type="GO" id="GO:0003682">
    <property type="term" value="F:chromatin binding"/>
    <property type="evidence" value="ECO:0000303"/>
    <property type="project" value="UniProtKB"/>
</dbReference>
<dbReference type="GO" id="GO:0042393">
    <property type="term" value="F:histone binding"/>
    <property type="evidence" value="ECO:0000314"/>
    <property type="project" value="MGI"/>
</dbReference>
<dbReference type="GO" id="GO:0140713">
    <property type="term" value="F:histone chaperone activity"/>
    <property type="evidence" value="ECO:0000314"/>
    <property type="project" value="UniProtKB"/>
</dbReference>
<dbReference type="GO" id="GO:0006281">
    <property type="term" value="P:DNA repair"/>
    <property type="evidence" value="ECO:0000314"/>
    <property type="project" value="MGI"/>
</dbReference>
<dbReference type="GO" id="GO:0140861">
    <property type="term" value="P:DNA repair-dependent chromatin remodeling"/>
    <property type="evidence" value="ECO:0000314"/>
    <property type="project" value="UniProt"/>
</dbReference>
<dbReference type="GO" id="GO:0006335">
    <property type="term" value="P:DNA replication-dependent chromatin assembly"/>
    <property type="evidence" value="ECO:0000318"/>
    <property type="project" value="GO_Central"/>
</dbReference>
<dbReference type="GO" id="GO:0042692">
    <property type="term" value="P:muscle cell differentiation"/>
    <property type="evidence" value="ECO:0007669"/>
    <property type="project" value="Ensembl"/>
</dbReference>
<dbReference type="GO" id="GO:0006334">
    <property type="term" value="P:nucleosome assembly"/>
    <property type="evidence" value="ECO:0000314"/>
    <property type="project" value="MGI"/>
</dbReference>
<dbReference type="GO" id="GO:0001649">
    <property type="term" value="P:osteoblast differentiation"/>
    <property type="evidence" value="ECO:0007669"/>
    <property type="project" value="Ensembl"/>
</dbReference>
<dbReference type="GO" id="GO:0031297">
    <property type="term" value="P:replication fork processing"/>
    <property type="evidence" value="ECO:0000314"/>
    <property type="project" value="UniProt"/>
</dbReference>
<dbReference type="FunFam" id="2.60.40.1490:FF:000001">
    <property type="entry name" value="Histone chaperone ASF1"/>
    <property type="match status" value="1"/>
</dbReference>
<dbReference type="Gene3D" id="2.60.40.1490">
    <property type="entry name" value="Histone chaperone ASF1-like"/>
    <property type="match status" value="1"/>
</dbReference>
<dbReference type="IDEAL" id="IID00182"/>
<dbReference type="InterPro" id="IPR006818">
    <property type="entry name" value="ASF1-like"/>
</dbReference>
<dbReference type="InterPro" id="IPR036747">
    <property type="entry name" value="ASF1-like_sf"/>
</dbReference>
<dbReference type="PANTHER" id="PTHR12040">
    <property type="entry name" value="ANTI-SILENCING PROTEIN 1"/>
    <property type="match status" value="1"/>
</dbReference>
<dbReference type="PANTHER" id="PTHR12040:SF8">
    <property type="entry name" value="HISTONE CHAPERONE ASF1A"/>
    <property type="match status" value="1"/>
</dbReference>
<dbReference type="Pfam" id="PF04729">
    <property type="entry name" value="ASF1_hist_chap"/>
    <property type="match status" value="1"/>
</dbReference>
<dbReference type="SUPFAM" id="SSF101546">
    <property type="entry name" value="ASF1-like"/>
    <property type="match status" value="1"/>
</dbReference>
<proteinExistence type="evidence at protein level"/>
<sequence>MAKVQVNNVVVLDNPSPFYNPFQFEITFECIEDLSEDLEWKIIYVGSAESEEYDQVLDSVLVGPVPAGRHMFVFQADAPNPGLIPDADAVGVTVVLITCTYRGQEFIRVGYYVNNEYTETELRENPPVKPDFSKLQRNILASNPRVTRFHINWEDNTEKLEDAESSNPNLQSLLSTDALPSASKGWSTSENSLNVMLESHMDCM</sequence>
<name>ASF1A_HUMAN</name>
<keyword id="KW-0002">3D-structure</keyword>
<keyword id="KW-0143">Chaperone</keyword>
<keyword id="KW-0156">Chromatin regulator</keyword>
<keyword id="KW-0158">Chromosome</keyword>
<keyword id="KW-0227">DNA damage</keyword>
<keyword id="KW-0539">Nucleus</keyword>
<keyword id="KW-0597">Phosphoprotein</keyword>
<keyword id="KW-1267">Proteomics identification</keyword>
<keyword id="KW-1185">Reference proteome</keyword>
<keyword id="KW-0804">Transcription</keyword>
<keyword id="KW-0805">Transcription regulation</keyword>
<reference key="1">
    <citation type="journal article" date="2000" name="Genes Cells">
        <title>A human homologue of yeast anti-silencing factor has histone chaperone activity.</title>
        <authorList>
            <person name="Munakata T."/>
            <person name="Adachi N."/>
            <person name="Yokoyama N."/>
            <person name="Kuzuhara T."/>
            <person name="Horikoshi M."/>
        </authorList>
    </citation>
    <scope>NUCLEOTIDE SEQUENCE [MRNA]</scope>
    <scope>FUNCTION</scope>
    <scope>INTERACTION WITH HISTONE H3.3; HISTONE H4 AND TAF1</scope>
</reference>
<reference key="2">
    <citation type="journal article" date="2001" name="Curr. Biol.">
        <title>Identification of human Asf1 chromatin assembly factors as substrates of Tousled-like kinases.</title>
        <authorList>
            <person name="Sillje H.H.W."/>
            <person name="Nigg E.A."/>
        </authorList>
    </citation>
    <scope>NUCLEOTIDE SEQUENCE [MRNA]</scope>
    <scope>PHOSPHORYLATION BY TLK1 AND TLK2</scope>
</reference>
<reference key="3">
    <citation type="journal article" date="2000" name="Genome Res.">
        <title>Identification of novel human genes evolutionarily conserved in Caenorhabditis elegans by comparative proteomics.</title>
        <authorList>
            <person name="Lai C.-H."/>
            <person name="Chou C.-Y."/>
            <person name="Ch'ang L.-Y."/>
            <person name="Liu C.-S."/>
            <person name="Lin W.-C."/>
        </authorList>
    </citation>
    <scope>NUCLEOTIDE SEQUENCE [LARGE SCALE MRNA]</scope>
</reference>
<reference key="4">
    <citation type="journal article" date="2000" name="Genome Res.">
        <title>Cloning and functional analysis of cDNAs with open reading frames for 300 previously undefined genes expressed in CD34+ hematopoietic stem/progenitor cells.</title>
        <authorList>
            <person name="Zhang Q.-H."/>
            <person name="Ye M."/>
            <person name="Wu X.-Y."/>
            <person name="Ren S.-X."/>
            <person name="Zhao M."/>
            <person name="Zhao C.-J."/>
            <person name="Fu G."/>
            <person name="Shen Y."/>
            <person name="Fan H.-Y."/>
            <person name="Lu G."/>
            <person name="Zhong M."/>
            <person name="Xu X.-R."/>
            <person name="Han Z.-G."/>
            <person name="Zhang J.-W."/>
            <person name="Tao J."/>
            <person name="Huang Q.-H."/>
            <person name="Zhou J."/>
            <person name="Hu G.-X."/>
            <person name="Gu J."/>
            <person name="Chen S.-J."/>
            <person name="Chen Z."/>
        </authorList>
    </citation>
    <scope>NUCLEOTIDE SEQUENCE [LARGE SCALE MRNA]</scope>
    <source>
        <tissue>Umbilical cord blood</tissue>
    </source>
</reference>
<reference key="5">
    <citation type="journal article" date="2001" name="Genome Res.">
        <title>Towards a catalog of human genes and proteins: sequencing and analysis of 500 novel complete protein coding human cDNAs.</title>
        <authorList>
            <person name="Wiemann S."/>
            <person name="Weil B."/>
            <person name="Wellenreuther R."/>
            <person name="Gassenhuber J."/>
            <person name="Glassl S."/>
            <person name="Ansorge W."/>
            <person name="Boecher M."/>
            <person name="Bloecker H."/>
            <person name="Bauersachs S."/>
            <person name="Blum H."/>
            <person name="Lauber J."/>
            <person name="Duesterhoeft A."/>
            <person name="Beyer A."/>
            <person name="Koehrer K."/>
            <person name="Strack N."/>
            <person name="Mewes H.-W."/>
            <person name="Ottenwaelder B."/>
            <person name="Obermaier B."/>
            <person name="Tampe J."/>
            <person name="Heubner D."/>
            <person name="Wambutt R."/>
            <person name="Korn B."/>
            <person name="Klein M."/>
            <person name="Poustka A."/>
        </authorList>
    </citation>
    <scope>NUCLEOTIDE SEQUENCE [LARGE SCALE MRNA]</scope>
    <source>
        <tissue>Brain</tissue>
    </source>
</reference>
<reference key="6">
    <citation type="journal article" date="2004" name="Nat. Genet.">
        <title>Complete sequencing and characterization of 21,243 full-length human cDNAs.</title>
        <authorList>
            <person name="Ota T."/>
            <person name="Suzuki Y."/>
            <person name="Nishikawa T."/>
            <person name="Otsuki T."/>
            <person name="Sugiyama T."/>
            <person name="Irie R."/>
            <person name="Wakamatsu A."/>
            <person name="Hayashi K."/>
            <person name="Sato H."/>
            <person name="Nagai K."/>
            <person name="Kimura K."/>
            <person name="Makita H."/>
            <person name="Sekine M."/>
            <person name="Obayashi M."/>
            <person name="Nishi T."/>
            <person name="Shibahara T."/>
            <person name="Tanaka T."/>
            <person name="Ishii S."/>
            <person name="Yamamoto J."/>
            <person name="Saito K."/>
            <person name="Kawai Y."/>
            <person name="Isono Y."/>
            <person name="Nakamura Y."/>
            <person name="Nagahari K."/>
            <person name="Murakami K."/>
            <person name="Yasuda T."/>
            <person name="Iwayanagi T."/>
            <person name="Wagatsuma M."/>
            <person name="Shiratori A."/>
            <person name="Sudo H."/>
            <person name="Hosoiri T."/>
            <person name="Kaku Y."/>
            <person name="Kodaira H."/>
            <person name="Kondo H."/>
            <person name="Sugawara M."/>
            <person name="Takahashi M."/>
            <person name="Kanda K."/>
            <person name="Yokoi T."/>
            <person name="Furuya T."/>
            <person name="Kikkawa E."/>
            <person name="Omura Y."/>
            <person name="Abe K."/>
            <person name="Kamihara K."/>
            <person name="Katsuta N."/>
            <person name="Sato K."/>
            <person name="Tanikawa M."/>
            <person name="Yamazaki M."/>
            <person name="Ninomiya K."/>
            <person name="Ishibashi T."/>
            <person name="Yamashita H."/>
            <person name="Murakawa K."/>
            <person name="Fujimori K."/>
            <person name="Tanai H."/>
            <person name="Kimata M."/>
            <person name="Watanabe M."/>
            <person name="Hiraoka S."/>
            <person name="Chiba Y."/>
            <person name="Ishida S."/>
            <person name="Ono Y."/>
            <person name="Takiguchi S."/>
            <person name="Watanabe S."/>
            <person name="Yosida M."/>
            <person name="Hotuta T."/>
            <person name="Kusano J."/>
            <person name="Kanehori K."/>
            <person name="Takahashi-Fujii A."/>
            <person name="Hara H."/>
            <person name="Tanase T.-O."/>
            <person name="Nomura Y."/>
            <person name="Togiya S."/>
            <person name="Komai F."/>
            <person name="Hara R."/>
            <person name="Takeuchi K."/>
            <person name="Arita M."/>
            <person name="Imose N."/>
            <person name="Musashino K."/>
            <person name="Yuuki H."/>
            <person name="Oshima A."/>
            <person name="Sasaki N."/>
            <person name="Aotsuka S."/>
            <person name="Yoshikawa Y."/>
            <person name="Matsunawa H."/>
            <person name="Ichihara T."/>
            <person name="Shiohata N."/>
            <person name="Sano S."/>
            <person name="Moriya S."/>
            <person name="Momiyama H."/>
            <person name="Satoh N."/>
            <person name="Takami S."/>
            <person name="Terashima Y."/>
            <person name="Suzuki O."/>
            <person name="Nakagawa S."/>
            <person name="Senoh A."/>
            <person name="Mizoguchi H."/>
            <person name="Goto Y."/>
            <person name="Shimizu F."/>
            <person name="Wakebe H."/>
            <person name="Hishigaki H."/>
            <person name="Watanabe T."/>
            <person name="Sugiyama A."/>
            <person name="Takemoto M."/>
            <person name="Kawakami B."/>
            <person name="Yamazaki M."/>
            <person name="Watanabe K."/>
            <person name="Kumagai A."/>
            <person name="Itakura S."/>
            <person name="Fukuzumi Y."/>
            <person name="Fujimori Y."/>
            <person name="Komiyama M."/>
            <person name="Tashiro H."/>
            <person name="Tanigami A."/>
            <person name="Fujiwara T."/>
            <person name="Ono T."/>
            <person name="Yamada K."/>
            <person name="Fujii Y."/>
            <person name="Ozaki K."/>
            <person name="Hirao M."/>
            <person name="Ohmori Y."/>
            <person name="Kawabata A."/>
            <person name="Hikiji T."/>
            <person name="Kobatake N."/>
            <person name="Inagaki H."/>
            <person name="Ikema Y."/>
            <person name="Okamoto S."/>
            <person name="Okitani R."/>
            <person name="Kawakami T."/>
            <person name="Noguchi S."/>
            <person name="Itoh T."/>
            <person name="Shigeta K."/>
            <person name="Senba T."/>
            <person name="Matsumura K."/>
            <person name="Nakajima Y."/>
            <person name="Mizuno T."/>
            <person name="Morinaga M."/>
            <person name="Sasaki M."/>
            <person name="Togashi T."/>
            <person name="Oyama M."/>
            <person name="Hata H."/>
            <person name="Watanabe M."/>
            <person name="Komatsu T."/>
            <person name="Mizushima-Sugano J."/>
            <person name="Satoh T."/>
            <person name="Shirai Y."/>
            <person name="Takahashi Y."/>
            <person name="Nakagawa K."/>
            <person name="Okumura K."/>
            <person name="Nagase T."/>
            <person name="Nomura N."/>
            <person name="Kikuchi H."/>
            <person name="Masuho Y."/>
            <person name="Yamashita R."/>
            <person name="Nakai K."/>
            <person name="Yada T."/>
            <person name="Nakamura Y."/>
            <person name="Ohara O."/>
            <person name="Isogai T."/>
            <person name="Sugano S."/>
        </authorList>
    </citation>
    <scope>NUCLEOTIDE SEQUENCE [LARGE SCALE MRNA]</scope>
</reference>
<reference key="7">
    <citation type="submission" date="2004-06" db="EMBL/GenBank/DDBJ databases">
        <title>Cloning of human full open reading frames in Gateway(TM) system entry vector (pDONR201).</title>
        <authorList>
            <person name="Ebert L."/>
            <person name="Schick M."/>
            <person name="Neubert P."/>
            <person name="Schatten R."/>
            <person name="Henze S."/>
            <person name="Korn B."/>
        </authorList>
    </citation>
    <scope>NUCLEOTIDE SEQUENCE [LARGE SCALE MRNA]</scope>
</reference>
<reference key="8">
    <citation type="journal article" date="2003" name="Nature">
        <title>The DNA sequence and analysis of human chromosome 6.</title>
        <authorList>
            <person name="Mungall A.J."/>
            <person name="Palmer S.A."/>
            <person name="Sims S.K."/>
            <person name="Edwards C.A."/>
            <person name="Ashurst J.L."/>
            <person name="Wilming L."/>
            <person name="Jones M.C."/>
            <person name="Horton R."/>
            <person name="Hunt S.E."/>
            <person name="Scott C.E."/>
            <person name="Gilbert J.G.R."/>
            <person name="Clamp M.E."/>
            <person name="Bethel G."/>
            <person name="Milne S."/>
            <person name="Ainscough R."/>
            <person name="Almeida J.P."/>
            <person name="Ambrose K.D."/>
            <person name="Andrews T.D."/>
            <person name="Ashwell R.I.S."/>
            <person name="Babbage A.K."/>
            <person name="Bagguley C.L."/>
            <person name="Bailey J."/>
            <person name="Banerjee R."/>
            <person name="Barker D.J."/>
            <person name="Barlow K.F."/>
            <person name="Bates K."/>
            <person name="Beare D.M."/>
            <person name="Beasley H."/>
            <person name="Beasley O."/>
            <person name="Bird C.P."/>
            <person name="Blakey S.E."/>
            <person name="Bray-Allen S."/>
            <person name="Brook J."/>
            <person name="Brown A.J."/>
            <person name="Brown J.Y."/>
            <person name="Burford D.C."/>
            <person name="Burrill W."/>
            <person name="Burton J."/>
            <person name="Carder C."/>
            <person name="Carter N.P."/>
            <person name="Chapman J.C."/>
            <person name="Clark S.Y."/>
            <person name="Clark G."/>
            <person name="Clee C.M."/>
            <person name="Clegg S."/>
            <person name="Cobley V."/>
            <person name="Collier R.E."/>
            <person name="Collins J.E."/>
            <person name="Colman L.K."/>
            <person name="Corby N.R."/>
            <person name="Coville G.J."/>
            <person name="Culley K.M."/>
            <person name="Dhami P."/>
            <person name="Davies J."/>
            <person name="Dunn M."/>
            <person name="Earthrowl M.E."/>
            <person name="Ellington A.E."/>
            <person name="Evans K.A."/>
            <person name="Faulkner L."/>
            <person name="Francis M.D."/>
            <person name="Frankish A."/>
            <person name="Frankland J."/>
            <person name="French L."/>
            <person name="Garner P."/>
            <person name="Garnett J."/>
            <person name="Ghori M.J."/>
            <person name="Gilby L.M."/>
            <person name="Gillson C.J."/>
            <person name="Glithero R.J."/>
            <person name="Grafham D.V."/>
            <person name="Grant M."/>
            <person name="Gribble S."/>
            <person name="Griffiths C."/>
            <person name="Griffiths M.N.D."/>
            <person name="Hall R."/>
            <person name="Halls K.S."/>
            <person name="Hammond S."/>
            <person name="Harley J.L."/>
            <person name="Hart E.A."/>
            <person name="Heath P.D."/>
            <person name="Heathcott R."/>
            <person name="Holmes S.J."/>
            <person name="Howden P.J."/>
            <person name="Howe K.L."/>
            <person name="Howell G.R."/>
            <person name="Huckle E."/>
            <person name="Humphray S.J."/>
            <person name="Humphries M.D."/>
            <person name="Hunt A.R."/>
            <person name="Johnson C.M."/>
            <person name="Joy A.A."/>
            <person name="Kay M."/>
            <person name="Keenan S.J."/>
            <person name="Kimberley A.M."/>
            <person name="King A."/>
            <person name="Laird G.K."/>
            <person name="Langford C."/>
            <person name="Lawlor S."/>
            <person name="Leongamornlert D.A."/>
            <person name="Leversha M."/>
            <person name="Lloyd C.R."/>
            <person name="Lloyd D.M."/>
            <person name="Loveland J.E."/>
            <person name="Lovell J."/>
            <person name="Martin S."/>
            <person name="Mashreghi-Mohammadi M."/>
            <person name="Maslen G.L."/>
            <person name="Matthews L."/>
            <person name="McCann O.T."/>
            <person name="McLaren S.J."/>
            <person name="McLay K."/>
            <person name="McMurray A."/>
            <person name="Moore M.J.F."/>
            <person name="Mullikin J.C."/>
            <person name="Niblett D."/>
            <person name="Nickerson T."/>
            <person name="Novik K.L."/>
            <person name="Oliver K."/>
            <person name="Overton-Larty E.K."/>
            <person name="Parker A."/>
            <person name="Patel R."/>
            <person name="Pearce A.V."/>
            <person name="Peck A.I."/>
            <person name="Phillimore B.J.C.T."/>
            <person name="Phillips S."/>
            <person name="Plumb R.W."/>
            <person name="Porter K.M."/>
            <person name="Ramsey Y."/>
            <person name="Ranby S.A."/>
            <person name="Rice C.M."/>
            <person name="Ross M.T."/>
            <person name="Searle S.M."/>
            <person name="Sehra H.K."/>
            <person name="Sheridan E."/>
            <person name="Skuce C.D."/>
            <person name="Smith S."/>
            <person name="Smith M."/>
            <person name="Spraggon L."/>
            <person name="Squares S.L."/>
            <person name="Steward C.A."/>
            <person name="Sycamore N."/>
            <person name="Tamlyn-Hall G."/>
            <person name="Tester J."/>
            <person name="Theaker A.J."/>
            <person name="Thomas D.W."/>
            <person name="Thorpe A."/>
            <person name="Tracey A."/>
            <person name="Tromans A."/>
            <person name="Tubby B."/>
            <person name="Wall M."/>
            <person name="Wallis J.M."/>
            <person name="West A.P."/>
            <person name="White S.S."/>
            <person name="Whitehead S.L."/>
            <person name="Whittaker H."/>
            <person name="Wild A."/>
            <person name="Willey D.J."/>
            <person name="Wilmer T.E."/>
            <person name="Wood J.M."/>
            <person name="Wray P.W."/>
            <person name="Wyatt J.C."/>
            <person name="Young L."/>
            <person name="Younger R.M."/>
            <person name="Bentley D.R."/>
            <person name="Coulson A."/>
            <person name="Durbin R.M."/>
            <person name="Hubbard T."/>
            <person name="Sulston J.E."/>
            <person name="Dunham I."/>
            <person name="Rogers J."/>
            <person name="Beck S."/>
        </authorList>
    </citation>
    <scope>NUCLEOTIDE SEQUENCE [LARGE SCALE GENOMIC DNA]</scope>
</reference>
<reference key="9">
    <citation type="journal article" date="2004" name="Genome Res.">
        <title>The status, quality, and expansion of the NIH full-length cDNA project: the Mammalian Gene Collection (MGC).</title>
        <authorList>
            <consortium name="The MGC Project Team"/>
        </authorList>
    </citation>
    <scope>NUCLEOTIDE SEQUENCE [LARGE SCALE MRNA]</scope>
    <source>
        <tissue>Placenta</tissue>
    </source>
</reference>
<reference key="10">
    <citation type="journal article" date="2002" name="EMBO Rep.">
        <title>Human Asf1 and CAF-1 interact and synergize in a repair-coupled nucleosome assembly pathway.</title>
        <authorList>
            <person name="Mello J.A."/>
            <person name="Sillje H.H.W."/>
            <person name="Roche D.M.J."/>
            <person name="Kirschner D.B."/>
            <person name="Nigg E.A."/>
            <person name="Almouzni G."/>
        </authorList>
    </citation>
    <scope>FUNCTION</scope>
    <scope>INTERACTION WITH CHAF1A; CHAF1B AND RBBP4</scope>
    <scope>SUBCELLULAR LOCATION</scope>
</reference>
<reference key="11">
    <citation type="journal article" date="2002" name="Proc. Natl. Acad. Sci. U.S.A.">
        <title>Identification and characterization of CIA/ASF1 as an interactor of bromodomains associated with TFIID.</title>
        <authorList>
            <person name="Chimura T."/>
            <person name="Kuzuhara T."/>
            <person name="Horikoshi M."/>
        </authorList>
    </citation>
    <scope>INTERACTION WITH TAF1</scope>
</reference>
<reference key="12">
    <citation type="journal article" date="2003" name="Curr. Biol.">
        <title>Structure and function of the conserved core of histone deposition protein Asf1.</title>
        <authorList>
            <person name="Daganzo S.M."/>
            <person name="Erzberger J.P."/>
            <person name="Lam W.M."/>
            <person name="Skordalakes E."/>
            <person name="Zhang R."/>
            <person name="Franco A.A."/>
            <person name="Brill S.J."/>
            <person name="Adams P.D."/>
            <person name="Berger J.M."/>
            <person name="Kaufman P.D."/>
        </authorList>
    </citation>
    <scope>INTERACTION WITH HIRA</scope>
    <scope>MUTAGENESIS OF 36-GLU-ASP-37 AND 62-VAL--PRO-64</scope>
</reference>
<reference key="13">
    <citation type="journal article" date="2003" name="J. Biol. Chem.">
        <title>Transcription initiation factor IID-interactive histone chaperone CIA-II implicated in mammalian spermatogenesis.</title>
        <authorList>
            <person name="Umehara T."/>
            <person name="Horikoshi M."/>
        </authorList>
    </citation>
    <scope>FUNCTION</scope>
    <scope>INTERACTION WITH HISTONE H3.3; HISTONE H4 AND TAF1</scope>
    <scope>SUBCELLULAR LOCATION</scope>
    <scope>TISSUE SPECIFICITY</scope>
</reference>
<reference key="14">
    <citation type="journal article" date="2004" name="Cell">
        <title>Histone H3.1 and H3.3 complexes mediate nucleosome assembly pathways dependent or independent of DNA synthesis.</title>
        <authorList>
            <person name="Tagami H."/>
            <person name="Ray-Gallet D."/>
            <person name="Almouzni G."/>
            <person name="Nakatani Y."/>
        </authorList>
    </citation>
    <scope>FUNCTION</scope>
    <scope>IDENTIFICATION BY MASS SPECTROMETRY</scope>
    <scope>IDENTIFICATION IN COMPLEXES WITH CABIN1; CHAF1A; CHAF1B; HAT1; HIRA; HISTONE H3.1; HISTONE H3.3; HISTONE H4; NASP; RBBP4 AND UBN1</scope>
</reference>
<reference key="15">
    <citation type="journal article" date="2005" name="Dev. Cell">
        <title>Formation of MacroH2A-containing senescence-associated heterochromatin foci and senescence driven by ASF1a and HIRA.</title>
        <authorList>
            <person name="Zhang R."/>
            <person name="Poustovoitov M.V."/>
            <person name="Ye X."/>
            <person name="Santos H.A."/>
            <person name="Chen W."/>
            <person name="Daganzo S.M."/>
            <person name="Erzberger J.P."/>
            <person name="Serebriiskii I.G."/>
            <person name="Canutescu A.A."/>
            <person name="Dunbrack R.L."/>
            <person name="Pehrson J.R."/>
            <person name="Berger J.M."/>
            <person name="Kaufman P.D."/>
            <person name="Adams P.D."/>
        </authorList>
    </citation>
    <scope>FUNCTION</scope>
    <scope>INTERACTION WITH HIRA</scope>
    <scope>MUTAGENESIS OF 36-GLU-ASP-37 AND 62-VAL--PRO-64</scope>
</reference>
<reference key="16">
    <citation type="journal article" date="2005" name="Eukaryot. Cell">
        <title>Functional conservation and specialization among eukaryotic anti-silencing function 1 histone chaperones.</title>
        <authorList>
            <person name="Tamburini B.A."/>
            <person name="Carson J.J."/>
            <person name="Adkins M.W."/>
            <person name="Tyler J.K."/>
        </authorList>
    </citation>
    <scope>FUNCTION</scope>
</reference>
<reference key="17">
    <citation type="journal article" date="2005" name="Mol. Cell">
        <title>Human Asf1 regulates the flow of S phase histones during replicational stress.</title>
        <authorList>
            <person name="Groth A."/>
            <person name="Ray-Gallet D."/>
            <person name="Quivy J.-P."/>
            <person name="Lukas J."/>
            <person name="Bartek J."/>
            <person name="Almouzni G."/>
        </authorList>
    </citation>
    <scope>FUNCTION</scope>
    <scope>INTERACTION WITH HISTONE H3.1; HISTONE H3.3; HISTONE H4; NASP AND RBBP4</scope>
</reference>
<reference key="18">
    <citation type="journal article" date="2008" name="Proc. Natl. Acad. Sci. U.S.A.">
        <title>A quantitative atlas of mitotic phosphorylation.</title>
        <authorList>
            <person name="Dephoure N."/>
            <person name="Zhou C."/>
            <person name="Villen J."/>
            <person name="Beausoleil S.A."/>
            <person name="Bakalarski C.E."/>
            <person name="Elledge S.J."/>
            <person name="Gygi S.P."/>
        </authorList>
    </citation>
    <scope>IDENTIFICATION BY MASS SPECTROMETRY [LARGE SCALE ANALYSIS]</scope>
    <source>
        <tissue>Cervix carcinoma</tissue>
    </source>
</reference>
<reference key="19">
    <citation type="journal article" date="2009" name="Anal. Chem.">
        <title>Lys-N and trypsin cover complementary parts of the phosphoproteome in a refined SCX-based approach.</title>
        <authorList>
            <person name="Gauci S."/>
            <person name="Helbig A.O."/>
            <person name="Slijper M."/>
            <person name="Krijgsveld J."/>
            <person name="Heck A.J."/>
            <person name="Mohammed S."/>
        </authorList>
    </citation>
    <scope>IDENTIFICATION BY MASS SPECTROMETRY [LARGE SCALE ANALYSIS]</scope>
</reference>
<reference key="20">
    <citation type="journal article" date="2009" name="Mol. Cell. Biol.">
        <title>Human UBN1 is an ortholog of yeast Hpc2p and has an essential role in the HIRA/ASF1a chromatin-remodeling pathway in senescent cells.</title>
        <authorList>
            <person name="Banumathy G."/>
            <person name="Somaiah N."/>
            <person name="Zhang R."/>
            <person name="Tang Y."/>
            <person name="Hoffmann J."/>
            <person name="Andrake M."/>
            <person name="Ceulemans H."/>
            <person name="Schultz D."/>
            <person name="Marmorstein R."/>
            <person name="Adams P.D."/>
        </authorList>
    </citation>
    <scope>INTERACTION WITH UBN1</scope>
</reference>
<reference key="21">
    <citation type="journal article" date="2009" name="PLoS ONE">
        <title>Phosphorylation-mediated control of histone chaperone ASF1 levels by Tousled-like kinases.</title>
        <authorList>
            <person name="Pilyugin M."/>
            <person name="Demmers J."/>
            <person name="Verrijzer C.P."/>
            <person name="Karch F."/>
            <person name="Moshkin Y.M."/>
        </authorList>
    </citation>
    <scope>PHOSPHORYLATION AT SER-192 BY TLK2</scope>
</reference>
<reference key="22">
    <citation type="journal article" date="2009" name="Sci. Signal.">
        <title>Quantitative phosphoproteomic analysis of T cell receptor signaling reveals system-wide modulation of protein-protein interactions.</title>
        <authorList>
            <person name="Mayya V."/>
            <person name="Lundgren D.H."/>
            <person name="Hwang S.-I."/>
            <person name="Rezaul K."/>
            <person name="Wu L."/>
            <person name="Eng J.K."/>
            <person name="Rodionov V."/>
            <person name="Han D.K."/>
        </authorList>
    </citation>
    <scope>IDENTIFICATION BY MASS SPECTROMETRY [LARGE SCALE ANALYSIS]</scope>
    <source>
        <tissue>Leukemic T-cell</tissue>
    </source>
</reference>
<reference key="23">
    <citation type="journal article" date="2011" name="BMC Syst. Biol.">
        <title>Initial characterization of the human central proteome.</title>
        <authorList>
            <person name="Burkard T.R."/>
            <person name="Planyavsky M."/>
            <person name="Kaupe I."/>
            <person name="Breitwieser F.P."/>
            <person name="Buerckstuemmer T."/>
            <person name="Bennett K.L."/>
            <person name="Superti-Furga G."/>
            <person name="Colinge J."/>
        </authorList>
    </citation>
    <scope>IDENTIFICATION BY MASS SPECTROMETRY [LARGE SCALE ANALYSIS]</scope>
</reference>
<reference key="24">
    <citation type="journal article" date="2011" name="J. Biol. Chem.">
        <title>Sequential establishment of marks on soluble histones H3 and H4.</title>
        <authorList>
            <person name="Alvarez F."/>
            <person name="Munoz F."/>
            <person name="Schilcher P."/>
            <person name="Imhof A."/>
            <person name="Almouzni G."/>
            <person name="Loyola A."/>
        </authorList>
    </citation>
    <scope>FUNCTION</scope>
    <scope>IDENTIFICATION IN A COMPLEX WITH IPO4; HISTONES H3 AND H4</scope>
</reference>
<reference key="25">
    <citation type="journal article" date="2011" name="Sci. Signal.">
        <title>System-wide temporal characterization of the proteome and phosphoproteome of human embryonic stem cell differentiation.</title>
        <authorList>
            <person name="Rigbolt K.T."/>
            <person name="Prokhorova T.A."/>
            <person name="Akimov V."/>
            <person name="Henningsen J."/>
            <person name="Johansen P.T."/>
            <person name="Kratchmarova I."/>
            <person name="Kassem M."/>
            <person name="Mann M."/>
            <person name="Olsen J.V."/>
            <person name="Blagoev B."/>
        </authorList>
    </citation>
    <scope>IDENTIFICATION BY MASS SPECTROMETRY [LARGE SCALE ANALYSIS]</scope>
</reference>
<reference key="26">
    <citation type="journal article" date="2012" name="EMBO J.">
        <title>Codanin-1, mutated in the anaemic disease CDAI, regulates Asf1 function in S-phase histone supply.</title>
        <authorList>
            <person name="Ask K."/>
            <person name="Jasencakova Z."/>
            <person name="Menard P."/>
            <person name="Feng Y."/>
            <person name="Almouzni G."/>
            <person name="Groth A."/>
        </authorList>
    </citation>
    <scope>INTERACTION WITH CDAN1</scope>
    <scope>IDENTIFICATION IN A COMPLEX WITH CDNA1; ASF1B; IPO4; HISTONES H3.2 AND H4</scope>
</reference>
<reference key="27">
    <citation type="journal article" date="2013" name="J. Proteome Res.">
        <title>Toward a comprehensive characterization of a human cancer cell phosphoproteome.</title>
        <authorList>
            <person name="Zhou H."/>
            <person name="Di Palma S."/>
            <person name="Preisinger C."/>
            <person name="Peng M."/>
            <person name="Polat A.N."/>
            <person name="Heck A.J."/>
            <person name="Mohammed S."/>
        </authorList>
    </citation>
    <scope>IDENTIFICATION BY MASS SPECTROMETRY [LARGE SCALE ANALYSIS]</scope>
    <source>
        <tissue>Erythroleukemia</tissue>
    </source>
</reference>
<reference key="28">
    <citation type="journal article" date="2014" name="J. Proteomics">
        <title>An enzyme assisted RP-RPLC approach for in-depth analysis of human liver phosphoproteome.</title>
        <authorList>
            <person name="Bian Y."/>
            <person name="Song C."/>
            <person name="Cheng K."/>
            <person name="Dong M."/>
            <person name="Wang F."/>
            <person name="Huang J."/>
            <person name="Sun D."/>
            <person name="Wang L."/>
            <person name="Ye M."/>
            <person name="Zou H."/>
        </authorList>
    </citation>
    <scope>IDENTIFICATION BY MASS SPECTROMETRY [LARGE SCALE ANALYSIS]</scope>
    <source>
        <tissue>Liver</tissue>
    </source>
</reference>
<reference key="29">
    <citation type="journal article" date="2014" name="Proc. Natl. Acad. Sci. U.S.A.">
        <title>Binding of the histone chaperone ASF1 to the CBP bromodomain promotes histone acetylation.</title>
        <authorList>
            <person name="Das C."/>
            <person name="Roy S."/>
            <person name="Namjoshi S."/>
            <person name="Malarkey C.S."/>
            <person name="Jones D.N."/>
            <person name="Kutateladze T.G."/>
            <person name="Churchill M.E."/>
            <person name="Tyler J.K."/>
        </authorList>
    </citation>
    <scope>INTERACTION WITH CREBBP</scope>
</reference>
<reference key="30">
    <citation type="journal article" date="2018" name="J. Mol. Biol.">
        <title>Integrative structural investigation on the architecture of human Importin4_Histone H3/H4_Asf1a complex and its histone H3 tail binding.</title>
        <authorList>
            <person name="Yoon J."/>
            <person name="Kim S.J."/>
            <person name="An S."/>
            <person name="Cho S."/>
            <person name="Leitner A."/>
            <person name="Jung T."/>
            <person name="Aebersold R."/>
            <person name="Hebert H."/>
            <person name="Cho U.S."/>
            <person name="Song J.J."/>
        </authorList>
    </citation>
    <scope>FUNCTION</scope>
</reference>
<reference key="31">
    <citation type="journal article" date="2018" name="Mol. Cell">
        <title>The histone chaperones ASF1 and CAF-1 promote MMS22L-TONSL-mediated Rad51 loading onto ssDNA during homologous recombination in human cells.</title>
        <authorList>
            <person name="Huang T.H."/>
            <person name="Fowler F."/>
            <person name="Chen C.C."/>
            <person name="Shen Z.J."/>
            <person name="Sleckman B."/>
            <person name="Tyler J.K."/>
        </authorList>
    </citation>
    <scope>FUNCTION</scope>
    <scope>SUBCELLULAR LOCATION</scope>
    <scope>PHOSPHORYLATION AT SER-192</scope>
    <scope>MUTAGENESIS OF VAL-94; SER-166; SER-175 AND SER-192</scope>
</reference>
<reference key="32">
    <citation type="journal article" date="2021" name="Mol. Cell">
        <title>DNAJC9 integrates heat shock molecular chaperones into the histone chaperone network.</title>
        <authorList>
            <person name="Hammond C.M."/>
            <person name="Bao H."/>
            <person name="Hendriks I.A."/>
            <person name="Carraro M."/>
            <person name="Garcia-Nieto A."/>
            <person name="Liu Y."/>
            <person name="Reveron-Gomez N."/>
            <person name="Spanos C."/>
            <person name="Chen L."/>
            <person name="Rappsilber J."/>
            <person name="Nielsen M.L."/>
            <person name="Patel D.J."/>
            <person name="Huang H."/>
            <person name="Groth A."/>
        </authorList>
    </citation>
    <scope>INTERACTION WITH HISTONE H3.3</scope>
</reference>
<reference key="33">
    <citation type="journal article" date="2005" name="Proc. Natl. Acad. Sci. U.S.A.">
        <title>Structural basis for the interaction of Asf1 with histone H3 and its functional implications.</title>
        <authorList>
            <person name="Mousson F."/>
            <person name="Lautrette A."/>
            <person name="Thuret J.-Y."/>
            <person name="Agez M."/>
            <person name="Courbeyrette R."/>
            <person name="Amigues B."/>
            <person name="Becker E."/>
            <person name="Neumann J.-M."/>
            <person name="Guerois R."/>
            <person name="Mann C."/>
            <person name="Ochsenbein F."/>
        </authorList>
    </citation>
    <scope>STRUCTURE BY NMR OF 1-156</scope>
    <scope>INTERACTION WITH HISTONE H3 AND HISTONE H4</scope>
    <scope>MUTAGENESIS OF ASP-54; VAL-94 AND ARG-108</scope>
</reference>
<reference key="34">
    <citation type="journal article" date="2006" name="Nat. Struct. Mol. Biol.">
        <title>Structure of a human ASF1a-HIRA complex and insights into specificity of histone chaperone complex assembly.</title>
        <authorList>
            <person name="Tang Y."/>
            <person name="Poustovoitov M.V."/>
            <person name="Zhao K."/>
            <person name="Garfinkel M."/>
            <person name="Canutescu A."/>
            <person name="Dunbrack R."/>
            <person name="Adams P.D."/>
            <person name="Marmorstein R."/>
        </authorList>
    </citation>
    <scope>X-RAY CRYSTALLOGRAPHY (2.7 ANGSTROMS) OF 1-157 IN COMPLEX WITH HIRA</scope>
    <scope>INTERACTION WITH CHAF1B</scope>
    <scope>MUTAGENESIS OF ASP-37</scope>
</reference>
<reference key="35">
    <citation type="journal article" date="2011" name="Mol. Cell">
        <title>A specific function for the histone chaperone NASP to fine-tune a reservoir of soluble H3-H4 in the histone supply chain.</title>
        <authorList>
            <person name="Cook A.J."/>
            <person name="Gurard-Levin Z.A."/>
            <person name="Vassias I."/>
            <person name="Almouzni G."/>
        </authorList>
    </citation>
    <scope>INTERACTION WITH NASP AND HISTONES H3 AND H4</scope>
</reference>
<reference evidence="30" key="36">
    <citation type="journal article" date="2007" name="Structure">
        <title>Structure of the histone chaperone ASF1 bound to the histone H3 C-terminal helix and functional insights.</title>
        <authorList>
            <person name="Agez M."/>
            <person name="Chen J."/>
            <person name="Guerois R."/>
            <person name="van Heijenoort C."/>
            <person name="Thuret J.-Y."/>
            <person name="Mann C."/>
            <person name="Ochsenbein F."/>
        </authorList>
    </citation>
    <scope>STRUCTURE BY NMR OF 1-156 IN COMPLEX WITH HISTONE H3.2</scope>
    <scope>INTERACTION WITH HISTONE H3</scope>
</reference>
<reference evidence="31 32" key="37">
    <citation type="journal article" date="2022" name="Nat. Commun.">
        <title>Tousled-like kinase 2 targets ASF1 histone chaperones through client mimicry.</title>
        <authorList>
            <person name="Simon B."/>
            <person name="Lou H.J."/>
            <person name="Huet-Calderwood C."/>
            <person name="Shi G."/>
            <person name="Boggon T.J."/>
            <person name="Turk B.E."/>
            <person name="Calderwood D.A."/>
        </authorList>
    </citation>
    <scope>X-RAY CRYSTALLOGRAPHY (2.10 ANGSTROMS) OF 1-155 IN COMPLEX WITH TLK2</scope>
    <scope>PHOSPHORYLATION</scope>
    <scope>MUTAGENESIS OF GLU-49; ASP-88 AND VAL-94</scope>
</reference>
<gene>
    <name evidence="24 29" type="primary">ASF1A</name>
    <name evidence="25" type="ORF">CGI-98</name>
    <name evidence="26" type="ORF">HSPC146</name>
</gene>
<accession>Q9Y294</accession>
<accession>Q6IA08</accession>
<accession>Q9P014</accession>
<evidence type="ECO:0000269" key="1">
    <source>
    </source>
</evidence>
<evidence type="ECO:0000269" key="2">
    <source>
    </source>
</evidence>
<evidence type="ECO:0000269" key="3">
    <source>
    </source>
</evidence>
<evidence type="ECO:0000269" key="4">
    <source>
    </source>
</evidence>
<evidence type="ECO:0000269" key="5">
    <source>
    </source>
</evidence>
<evidence type="ECO:0000269" key="6">
    <source>
    </source>
</evidence>
<evidence type="ECO:0000269" key="7">
    <source>
    </source>
</evidence>
<evidence type="ECO:0000269" key="8">
    <source>
    </source>
</evidence>
<evidence type="ECO:0000269" key="9">
    <source>
    </source>
</evidence>
<evidence type="ECO:0000269" key="10">
    <source>
    </source>
</evidence>
<evidence type="ECO:0000269" key="11">
    <source>
    </source>
</evidence>
<evidence type="ECO:0000269" key="12">
    <source>
    </source>
</evidence>
<evidence type="ECO:0000269" key="13">
    <source>
    </source>
</evidence>
<evidence type="ECO:0000269" key="14">
    <source>
    </source>
</evidence>
<evidence type="ECO:0000269" key="15">
    <source>
    </source>
</evidence>
<evidence type="ECO:0000269" key="16">
    <source>
    </source>
</evidence>
<evidence type="ECO:0000269" key="17">
    <source>
    </source>
</evidence>
<evidence type="ECO:0000269" key="18">
    <source>
    </source>
</evidence>
<evidence type="ECO:0000269" key="19">
    <source>
    </source>
</evidence>
<evidence type="ECO:0000269" key="20">
    <source>
    </source>
</evidence>
<evidence type="ECO:0000269" key="21">
    <source>
    </source>
</evidence>
<evidence type="ECO:0000269" key="22">
    <source>
    </source>
</evidence>
<evidence type="ECO:0000269" key="23">
    <source>
    </source>
</evidence>
<evidence type="ECO:0000303" key="24">
    <source>
    </source>
</evidence>
<evidence type="ECO:0000303" key="25">
    <source>
    </source>
</evidence>
<evidence type="ECO:0000303" key="26">
    <source>
    </source>
</evidence>
<evidence type="ECO:0000303" key="27">
    <source>
    </source>
</evidence>
<evidence type="ECO:0000305" key="28"/>
<evidence type="ECO:0000312" key="29">
    <source>
        <dbReference type="HGNC" id="HGNC:20995"/>
    </source>
</evidence>
<evidence type="ECO:0007744" key="30">
    <source>
        <dbReference type="PDB" id="2IIJ"/>
    </source>
</evidence>
<evidence type="ECO:0007744" key="31">
    <source>
        <dbReference type="PDB" id="7LNY"/>
    </source>
</evidence>
<evidence type="ECO:0007744" key="32">
    <source>
        <dbReference type="PDB" id="7LO0"/>
    </source>
</evidence>
<evidence type="ECO:0007829" key="33">
    <source>
        <dbReference type="PDB" id="6ZUF"/>
    </source>
</evidence>
<protein>
    <recommendedName>
        <fullName>Histone chaperone ASF1A</fullName>
    </recommendedName>
    <alternativeName>
        <fullName evidence="24">Anti-silencing function protein 1 homolog A</fullName>
        <shortName evidence="24">hAsf1</shortName>
        <shortName evidence="24">hAsf1a</shortName>
    </alternativeName>
    <alternativeName>
        <fullName evidence="27">CCG1-interacting factor A</fullName>
        <shortName evidence="27">CIA</shortName>
        <shortName evidence="27">hCIA</shortName>
    </alternativeName>
</protein>
<feature type="chain" id="PRO_0000284012" description="Histone chaperone ASF1A">
    <location>
        <begin position="1"/>
        <end position="204"/>
    </location>
</feature>
<feature type="region of interest" description="Interaction with histone H3, CHAF1B, and HIRA" evidence="10">
    <location>
        <begin position="1"/>
        <end position="156"/>
    </location>
</feature>
<feature type="region of interest" description="Required for interaction with HIRA" evidence="8 12">
    <location>
        <begin position="155"/>
        <end position="204"/>
    </location>
</feature>
<feature type="short sequence motif" description="Required for interaction with HIRA" evidence="8 12">
    <location>
        <begin position="31"/>
        <end position="37"/>
    </location>
</feature>
<feature type="modified residue" description="Phosphoserine; by PRKDC and TLK2" evidence="15 21">
    <location>
        <position position="192"/>
    </location>
</feature>
<feature type="mutagenesis site" description="Abrogates interaction with HIRA and induction of senescence-associated heterochromatin foci." evidence="6 8">
    <original>ED</original>
    <variation>AA</variation>
    <location>
        <begin position="36"/>
        <end position="37"/>
    </location>
</feature>
<feature type="mutagenesis site" description="Abrogates interaction with CHAF1B and HIRA." evidence="12">
    <original>D</original>
    <variation>A</variation>
    <location>
        <position position="37"/>
    </location>
</feature>
<feature type="mutagenesis site" description="Loss of interaction with TLK2." evidence="23">
    <original>E</original>
    <variation>A</variation>
    <location>
        <position position="49"/>
    </location>
</feature>
<feature type="mutagenesis site" description="Reduces interaction with histone H3." evidence="10">
    <original>D</original>
    <variation>R</variation>
    <location>
        <position position="54"/>
    </location>
</feature>
<feature type="mutagenesis site" description="Abrogates interaction with HIRA and induction of senescence-associated heterochromatin foci." evidence="6 8">
    <original>VGP</original>
    <variation>AAA</variation>
    <location>
        <begin position="62"/>
        <end position="64"/>
    </location>
</feature>
<feature type="mutagenesis site" description="Loss of interaction with TLK2. Reduced phosphorylation." evidence="23">
    <original>D</original>
    <variation>A</variation>
    <location>
        <position position="88"/>
    </location>
</feature>
<feature type="mutagenesis site" description="Abrogates interaction with histone H3 and histone H4. Loss of interaction with TLK2. Reduced phosphorylation." evidence="10 21 23">
    <original>V</original>
    <variation>R</variation>
    <location>
        <position position="94"/>
    </location>
</feature>
<feature type="mutagenesis site" description="Reduces interaction with histone H3." evidence="10">
    <original>R</original>
    <variation>E</variation>
    <location>
        <position position="108"/>
    </location>
</feature>
<feature type="mutagenesis site" description="Does not affect phosphorylation in response to DNA damage." evidence="21">
    <original>S</original>
    <variation>A</variation>
    <location>
        <position position="166"/>
    </location>
</feature>
<feature type="mutagenesis site" description="Does not affect phosphorylation in response to DNA damage." evidence="21">
    <original>S</original>
    <variation>A</variation>
    <location>
        <position position="175"/>
    </location>
</feature>
<feature type="mutagenesis site" description="Abolished phosphorylation in response to DNA damage." evidence="21">
    <original>S</original>
    <variation>A</variation>
    <location>
        <position position="192"/>
    </location>
</feature>
<feature type="mutagenesis site" description="Mimics phosphorylation; promoting recruitment to chromatin in response to DNA damage." evidence="21">
    <original>S</original>
    <variation>D</variation>
    <location>
        <position position="192"/>
    </location>
</feature>
<feature type="sequence conflict" description="In Ref. 4; AAF29110." evidence="28" ref="4">
    <original>F</original>
    <variation>I</variation>
    <location>
        <position position="74"/>
    </location>
</feature>
<feature type="sequence conflict" description="In Ref. 7; CAG33628." evidence="28" ref="7">
    <original>M</original>
    <variation>I</variation>
    <location>
        <position position="204"/>
    </location>
</feature>
<feature type="strand" evidence="33">
    <location>
        <begin position="4"/>
        <end position="13"/>
    </location>
</feature>
<feature type="strand" evidence="33">
    <location>
        <begin position="15"/>
        <end position="17"/>
    </location>
</feature>
<feature type="strand" evidence="33">
    <location>
        <begin position="22"/>
        <end position="32"/>
    </location>
</feature>
<feature type="strand" evidence="33">
    <location>
        <begin position="34"/>
        <end position="36"/>
    </location>
</feature>
<feature type="strand" evidence="33">
    <location>
        <begin position="38"/>
        <end position="46"/>
    </location>
</feature>
<feature type="helix" evidence="33">
    <location>
        <begin position="51"/>
        <end position="53"/>
    </location>
</feature>
<feature type="strand" evidence="33">
    <location>
        <begin position="54"/>
        <end position="62"/>
    </location>
</feature>
<feature type="strand" evidence="33">
    <location>
        <begin position="67"/>
        <end position="76"/>
    </location>
</feature>
<feature type="helix" evidence="33">
    <location>
        <begin position="81"/>
        <end position="83"/>
    </location>
</feature>
<feature type="helix" evidence="33">
    <location>
        <begin position="86"/>
        <end position="89"/>
    </location>
</feature>
<feature type="strand" evidence="33">
    <location>
        <begin position="90"/>
        <end position="101"/>
    </location>
</feature>
<feature type="strand" evidence="33">
    <location>
        <begin position="104"/>
        <end position="117"/>
    </location>
</feature>
<feature type="helix" evidence="33">
    <location>
        <begin position="120"/>
        <end position="124"/>
    </location>
</feature>
<feature type="helix" evidence="33">
    <location>
        <begin position="132"/>
        <end position="134"/>
    </location>
</feature>
<feature type="strand" evidence="33">
    <location>
        <begin position="135"/>
        <end position="139"/>
    </location>
</feature>
<feature type="strand" evidence="33">
    <location>
        <begin position="145"/>
        <end position="148"/>
    </location>
</feature>
<comment type="function">
    <text evidence="1 3 5 7 8 9 11 16 20 21">Histone chaperone that facilitates histone deposition and histone exchange and removal during nucleosome assembly and disassembly (PubMed:10759893, PubMed:11897662, PubMed:12842904, PubMed:14718166, PubMed:15664198, PubMed:16151251, PubMed:21454524). Cooperates with chromatin assembly factor 1 (CAF-1) to promote replication-dependent chromatin assembly and with HIRA to promote replication-independent chromatin assembly (PubMed:11897662, PubMed:14718166, PubMed:15664198). Promotes homologous recombination-mediated repair of double-strand breaks (DSBs) at stalled or collapsed replication forks: acts by mediating histone replacement at DSBs, leading to recruitment of the MMS22L-TONSL complex and subsequent loading of RAD51 (PubMed:29478807). Also involved in the nuclear import of the histone H3-H4 dimer together with importin-4 (IPO4): specifically recognizes and binds newly synthesized histones with the monomethylation of H3 'Lys-9' and acetylation at 'Lys-14' (H3K9me1K14ac) marks, and diacetylation at 'Lys-5' and 'Lys-12' of H4 (H4K5K12ac) marks in the cytosol (PubMed:21454524, PubMed:29408485). Required for the formation of senescence-associated heterochromatin foci (SAHF) and efficient senescence-associated cell cycle exit (PubMed:15621527).</text>
</comment>
<comment type="subunit">
    <text evidence="1 3 4 5 6 7 8 9 10 12 13 14 16 17 18 19 22">Interacts with histone H3 (via C-terminus), including histone H3.1, H3.2 and H3.3, and histone H4; the interaction with H3 is direct (PubMed:10759893, PubMed:12842904, PubMed:14718166, PubMed:15664198, PubMed:15840725, PubMed:17292837, PubMed:22195965, PubMed:33857403). Probably interacts with the heterodimeric form of H3-H4 taking the place of the second dimer (PubMed:17292837). Interacts with the CHAF1A, CHAF1B and RBBP4 subunits of the CAF-1 complex (PubMed:11897662, PubMed:16980972). Interacts with CABIN1, HAT1, HIRA, NASP, TAF1 and UBN1 (PubMed:12093919, PubMed:14680630, PubMed:14718166, PubMed:15621527, PubMed:16980972, PubMed:19029251). Found in a soluble complex with NASP and histones H3 and H4; the interaction with NASP is probably indirect and mediated by H3-H4 (PubMed:22195965). Interacts with CDAN1 (PubMed:22407294). Found in a cytosolic complex with IPO4 and histones H3 and H4 (PubMed:21454524, PubMed:22407294). Interacts with CREBBP (PubMed:24616510).</text>
</comment>
<comment type="interaction">
    <interactant intactId="EBI-749553">
        <id>Q9Y294</id>
    </interactant>
    <interactant intactId="EBI-1052944">
        <id>Q13112</id>
        <label>CHAF1B</label>
    </interactant>
    <organismsDiffer>false</organismsDiffer>
    <experiments>3</experiments>
</comment>
<comment type="interaction">
    <interactant intactId="EBI-749553">
        <id>Q9Y294</id>
    </interactant>
    <interactant intactId="EBI-78473">
        <id>P03372</id>
        <label>ESR1</label>
    </interactant>
    <organismsDiffer>false</organismsDiffer>
    <experiments>4</experiments>
</comment>
<comment type="interaction">
    <interactant intactId="EBI-749553">
        <id>Q9Y294</id>
    </interactant>
    <interactant intactId="EBI-302023">
        <id>P62805</id>
        <label>H4C9</label>
    </interactant>
    <organismsDiffer>false</organismsDiffer>
    <experiments>17</experiments>
</comment>
<comment type="interaction">
    <interactant intactId="EBI-749553">
        <id>Q9Y294</id>
    </interactant>
    <interactant intactId="EBI-372342">
        <id>P54198</id>
        <label>HIRA</label>
    </interactant>
    <organismsDiffer>false</organismsDiffer>
    <experiments>16</experiments>
</comment>
<comment type="interaction">
    <interactant intactId="EBI-749553">
        <id>Q9Y294</id>
    </interactant>
    <interactant intactId="EBI-374819">
        <id>P49736</id>
        <label>MCM2</label>
    </interactant>
    <organismsDiffer>false</organismsDiffer>
    <experiments>12</experiments>
</comment>
<comment type="interaction">
    <interactant intactId="EBI-749553">
        <id>Q9Y294</id>
    </interactant>
    <interactant intactId="EBI-7038920">
        <id>P49321-2</id>
        <label>NASP</label>
    </interactant>
    <organismsDiffer>false</organismsDiffer>
    <experiments>3</experiments>
</comment>
<comment type="interaction">
    <interactant intactId="EBI-749553">
        <id>Q9Y294</id>
    </interactant>
    <interactant intactId="EBI-2803328">
        <id>P79522</id>
        <label>PRR3</label>
    </interactant>
    <organismsDiffer>false</organismsDiffer>
    <experiments>6</experiments>
</comment>
<comment type="interaction">
    <interactant intactId="EBI-749553">
        <id>Q9Y294</id>
    </interactant>
    <interactant intactId="EBI-740492">
        <id>Q9UKI8</id>
        <label>TLK1</label>
    </interactant>
    <organismsDiffer>false</organismsDiffer>
    <experiments>3</experiments>
</comment>
<comment type="interaction">
    <interactant intactId="EBI-749553">
        <id>Q9Y294</id>
    </interactant>
    <interactant intactId="EBI-1047967">
        <id>Q86UE8</id>
        <label>TLK2</label>
    </interactant>
    <organismsDiffer>false</organismsDiffer>
    <experiments>10</experiments>
</comment>
<comment type="subcellular location">
    <subcellularLocation>
        <location evidence="3 5">Nucleus</location>
    </subcellularLocation>
    <subcellularLocation>
        <location evidence="21">Chromosome</location>
    </subcellularLocation>
</comment>
<comment type="tissue specificity">
    <text evidence="5">Ubiquitously expressed.</text>
</comment>
<comment type="PTM">
    <text evidence="2 15 21 23">Phosphorylated by TLK1 and TLK2 (PubMed:11470414, PubMed:20016786, PubMed:35136069). Highly phosphorylated in S-phase and at lower levels in M-phase (PubMed:11470414). TLK2-mediated phosphorylation at Ser-192 prevents proteasome-dependent degradation (PubMed:20016786). Phosphorylation at Ser-192 by PRKDC in response to DNA damage promotes the histone chaperone activity and ability to replace histones at double-strand breaks (DSBs) at stalled or collapsed replication forks, leading to RAD51 recruitment (PubMed:29478807).</text>
</comment>
<comment type="similarity">
    <text evidence="28">Belongs to the ASF1 family.</text>
</comment>